<keyword id="KW-0004">4Fe-4S</keyword>
<keyword id="KW-0067">ATP-binding</keyword>
<keyword id="KW-0077">Bacteriochlorophyll biosynthesis</keyword>
<keyword id="KW-0149">Chlorophyll biosynthesis</keyword>
<keyword id="KW-0408">Iron</keyword>
<keyword id="KW-0411">Iron-sulfur</keyword>
<keyword id="KW-0479">Metal-binding</keyword>
<keyword id="KW-0547">Nucleotide-binding</keyword>
<keyword id="KW-0560">Oxidoreductase</keyword>
<keyword id="KW-0602">Photosynthesis</keyword>
<keyword id="KW-1185">Reference proteome</keyword>
<feature type="chain" id="PRO_1000079378" description="Light-independent protochlorophyllide reductase subunit B">
    <location>
        <begin position="1"/>
        <end position="563"/>
    </location>
</feature>
<feature type="region of interest" description="Disordered" evidence="2">
    <location>
        <begin position="459"/>
        <end position="478"/>
    </location>
</feature>
<feature type="active site" description="Proton donor" evidence="1">
    <location>
        <position position="293"/>
    </location>
</feature>
<feature type="binding site" evidence="1">
    <location>
        <position position="36"/>
    </location>
    <ligand>
        <name>[4Fe-4S] cluster</name>
        <dbReference type="ChEBI" id="CHEBI:49883"/>
        <note>ligand shared with heterodimeric partner</note>
    </ligand>
</feature>
<feature type="binding site" evidence="1">
    <location>
        <begin position="437"/>
        <end position="438"/>
    </location>
    <ligand>
        <name>substrate</name>
    </ligand>
</feature>
<evidence type="ECO:0000255" key="1">
    <source>
        <dbReference type="HAMAP-Rule" id="MF_00353"/>
    </source>
</evidence>
<evidence type="ECO:0000256" key="2">
    <source>
        <dbReference type="SAM" id="MobiDB-lite"/>
    </source>
</evidence>
<organism>
    <name type="scientific">Roseiflexus castenholzii (strain DSM 13941 / HLO8)</name>
    <dbReference type="NCBI Taxonomy" id="383372"/>
    <lineage>
        <taxon>Bacteria</taxon>
        <taxon>Bacillati</taxon>
        <taxon>Chloroflexota</taxon>
        <taxon>Chloroflexia</taxon>
        <taxon>Chloroflexales</taxon>
        <taxon>Roseiflexineae</taxon>
        <taxon>Roseiflexaceae</taxon>
        <taxon>Roseiflexus</taxon>
    </lineage>
</organism>
<name>BCHB_ROSCS</name>
<gene>
    <name evidence="1" type="primary">bchB</name>
    <name type="ordered locus">Rcas_1537</name>
</gene>
<sequence>MRLALWMYQGTAHHGVGRIANSMRGVHAVFHAPQGDDYVNPIFTMLERTPDFPRMTTSIVSGRDLAQGTVRLPETLRQVDAQVQPDLIIVCASCSTILLQEDLERMAHSAGTRAETLVYDANPYRMQEVRSADGLFTLLTQRFARSQPPTAVPSVNILGPASLGFHNRSDLICLRRMLATLGVQVNVVAPLGASIRDLERLPAAWATIAPYRELGQNAARWLDEQFGVPALTDSPIGVQPTLRWLRRLVETLNDAGERLQRLTNPLRLPPLTAFSLDGMSAPSSVPWFARTADMESYSMKRAFVFGDATHTVGMVKFLRDELGMQIVGAGTYLEHEADWVRGELQDYLPADETGSIDTSFLVTEVFQDVARRIADLTPELVCGTQMERHACRKLDLPCMVIAPPTHIENHLLSYRPVLGFDGADVLADTVYTTATLGMEKHLIDMFGDAGLEYEEPRTERREAEFGNQKVETGEPGTGAPVIAHADSNGGVAGSSSTLAAQTVTASPRLVTPVWAPEAQAMLKKVPFFVRGRVQKNVERYAAQHGYATITAEILVEAKEALGG</sequence>
<accession>A7NJG0</accession>
<comment type="function">
    <text evidence="1">Component of the dark-operative protochlorophyllide reductase (DPOR) that uses Mg-ATP and reduced ferredoxin to reduce ring D of protochlorophyllide (Pchlide) to form chlorophyllide a (Chlide). This reaction is light-independent. The NB-protein (BchN-BchB) is the catalytic component of the complex.</text>
</comment>
<comment type="catalytic activity">
    <reaction evidence="1">
        <text>chlorophyllide a + oxidized 2[4Fe-4S]-[ferredoxin] + 2 ADP + 2 phosphate = protochlorophyllide a + reduced 2[4Fe-4S]-[ferredoxin] + 2 ATP + 2 H2O</text>
        <dbReference type="Rhea" id="RHEA:28202"/>
        <dbReference type="Rhea" id="RHEA-COMP:10002"/>
        <dbReference type="Rhea" id="RHEA-COMP:10004"/>
        <dbReference type="ChEBI" id="CHEBI:15377"/>
        <dbReference type="ChEBI" id="CHEBI:30616"/>
        <dbReference type="ChEBI" id="CHEBI:33722"/>
        <dbReference type="ChEBI" id="CHEBI:33723"/>
        <dbReference type="ChEBI" id="CHEBI:43474"/>
        <dbReference type="ChEBI" id="CHEBI:83348"/>
        <dbReference type="ChEBI" id="CHEBI:83350"/>
        <dbReference type="ChEBI" id="CHEBI:456216"/>
        <dbReference type="EC" id="1.3.7.7"/>
    </reaction>
</comment>
<comment type="cofactor">
    <cofactor evidence="1">
        <name>[4Fe-4S] cluster</name>
        <dbReference type="ChEBI" id="CHEBI:49883"/>
    </cofactor>
    <text evidence="1">Binds 1 [4Fe-4S] cluster per heterodimer. The cluster is bound at the heterodimer interface by residues from both subunits.</text>
</comment>
<comment type="pathway">
    <text evidence="1">Porphyrin-containing compound metabolism; bacteriochlorophyll biosynthesis (light-independent).</text>
</comment>
<comment type="subunit">
    <text evidence="1">Protochlorophyllide reductase is composed of three subunits; BchL, BchN and BchB. Forms a heterotetramer of two BchB and two BchN subunits.</text>
</comment>
<comment type="similarity">
    <text evidence="1">Belongs to the ChlB/BchB/BchZ family.</text>
</comment>
<reference key="1">
    <citation type="submission" date="2007-08" db="EMBL/GenBank/DDBJ databases">
        <title>Complete sequence of Roseiflexus castenholzii DSM 13941.</title>
        <authorList>
            <consortium name="US DOE Joint Genome Institute"/>
            <person name="Copeland A."/>
            <person name="Lucas S."/>
            <person name="Lapidus A."/>
            <person name="Barry K."/>
            <person name="Glavina del Rio T."/>
            <person name="Dalin E."/>
            <person name="Tice H."/>
            <person name="Pitluck S."/>
            <person name="Thompson L.S."/>
            <person name="Brettin T."/>
            <person name="Bruce D."/>
            <person name="Detter J.C."/>
            <person name="Han C."/>
            <person name="Tapia R."/>
            <person name="Schmutz J."/>
            <person name="Larimer F."/>
            <person name="Land M."/>
            <person name="Hauser L."/>
            <person name="Kyrpides N."/>
            <person name="Mikhailova N."/>
            <person name="Bryant D.A."/>
            <person name="Hanada S."/>
            <person name="Tsukatani Y."/>
            <person name="Richardson P."/>
        </authorList>
    </citation>
    <scope>NUCLEOTIDE SEQUENCE [LARGE SCALE GENOMIC DNA]</scope>
    <source>
        <strain>DSM 13941 / HLO8</strain>
    </source>
</reference>
<protein>
    <recommendedName>
        <fullName evidence="1">Light-independent protochlorophyllide reductase subunit B</fullName>
        <shortName evidence="1">DPOR subunit B</shortName>
        <shortName evidence="1">LI-POR subunit B</shortName>
        <ecNumber evidence="1">1.3.7.7</ecNumber>
    </recommendedName>
</protein>
<proteinExistence type="inferred from homology"/>
<dbReference type="EC" id="1.3.7.7" evidence="1"/>
<dbReference type="EMBL" id="CP000804">
    <property type="protein sequence ID" value="ABU57630.1"/>
    <property type="molecule type" value="Genomic_DNA"/>
</dbReference>
<dbReference type="RefSeq" id="WP_012120058.1">
    <property type="nucleotide sequence ID" value="NC_009767.1"/>
</dbReference>
<dbReference type="SMR" id="A7NJG0"/>
<dbReference type="STRING" id="383372.Rcas_1537"/>
<dbReference type="KEGG" id="rca:Rcas_1537"/>
<dbReference type="eggNOG" id="COG2710">
    <property type="taxonomic scope" value="Bacteria"/>
</dbReference>
<dbReference type="HOGENOM" id="CLU_025470_0_0_0"/>
<dbReference type="OrthoDB" id="495776at2"/>
<dbReference type="UniPathway" id="UPA00671"/>
<dbReference type="Proteomes" id="UP000000263">
    <property type="component" value="Chromosome"/>
</dbReference>
<dbReference type="GO" id="GO:0051539">
    <property type="term" value="F:4 iron, 4 sulfur cluster binding"/>
    <property type="evidence" value="ECO:0007669"/>
    <property type="project" value="UniProtKB-UniRule"/>
</dbReference>
<dbReference type="GO" id="GO:0005524">
    <property type="term" value="F:ATP binding"/>
    <property type="evidence" value="ECO:0007669"/>
    <property type="project" value="UniProtKB-UniRule"/>
</dbReference>
<dbReference type="GO" id="GO:0046872">
    <property type="term" value="F:metal ion binding"/>
    <property type="evidence" value="ECO:0007669"/>
    <property type="project" value="UniProtKB-KW"/>
</dbReference>
<dbReference type="GO" id="GO:0016730">
    <property type="term" value="F:oxidoreductase activity, acting on iron-sulfur proteins as donors"/>
    <property type="evidence" value="ECO:0007669"/>
    <property type="project" value="InterPro"/>
</dbReference>
<dbReference type="GO" id="GO:0016636">
    <property type="term" value="F:oxidoreductase activity, acting on the CH-CH group of donors, iron-sulfur protein as acceptor"/>
    <property type="evidence" value="ECO:0007669"/>
    <property type="project" value="UniProtKB-UniRule"/>
</dbReference>
<dbReference type="GO" id="GO:0036070">
    <property type="term" value="P:light-independent bacteriochlorophyll biosynthetic process"/>
    <property type="evidence" value="ECO:0007669"/>
    <property type="project" value="UniProtKB-UniRule"/>
</dbReference>
<dbReference type="GO" id="GO:0019685">
    <property type="term" value="P:photosynthesis, dark reaction"/>
    <property type="evidence" value="ECO:0007669"/>
    <property type="project" value="InterPro"/>
</dbReference>
<dbReference type="Gene3D" id="1.20.89.20">
    <property type="match status" value="1"/>
</dbReference>
<dbReference type="Gene3D" id="3.40.50.1980">
    <property type="entry name" value="Nitrogenase molybdenum iron protein domain"/>
    <property type="match status" value="3"/>
</dbReference>
<dbReference type="Gene3D" id="1.10.8.550">
    <property type="entry name" value="Proto-chlorophyllide reductase 57 kD subunit B"/>
    <property type="match status" value="1"/>
</dbReference>
<dbReference type="HAMAP" id="MF_00353">
    <property type="entry name" value="ChlB_BchB"/>
    <property type="match status" value="1"/>
</dbReference>
<dbReference type="InterPro" id="IPR050152">
    <property type="entry name" value="ChlB/BchB/BchZ"/>
</dbReference>
<dbReference type="InterPro" id="IPR013580">
    <property type="entry name" value="LI-POR_suB-like_C"/>
</dbReference>
<dbReference type="InterPro" id="IPR000510">
    <property type="entry name" value="Nase/OxRdtase_comp1"/>
</dbReference>
<dbReference type="InterPro" id="IPR042298">
    <property type="entry name" value="P-CP_red_C"/>
</dbReference>
<dbReference type="InterPro" id="IPR005969">
    <property type="entry name" value="Protochl_reductB"/>
</dbReference>
<dbReference type="InterPro" id="IPR016209">
    <property type="entry name" value="Protochlorophyllide_Rdtase"/>
</dbReference>
<dbReference type="NCBIfam" id="TIGR01278">
    <property type="entry name" value="DPOR_BchB"/>
    <property type="match status" value="1"/>
</dbReference>
<dbReference type="NCBIfam" id="NF002789">
    <property type="entry name" value="PRK02910.1-3"/>
    <property type="match status" value="1"/>
</dbReference>
<dbReference type="PANTHER" id="PTHR33712">
    <property type="entry name" value="LIGHT-INDEPENDENT PROTOCHLOROPHYLLIDE REDUCTASE SUBUNIT B"/>
    <property type="match status" value="1"/>
</dbReference>
<dbReference type="PANTHER" id="PTHR33712:SF7">
    <property type="entry name" value="LIGHT-INDEPENDENT PROTOCHLOROPHYLLIDE REDUCTASE SUBUNIT B"/>
    <property type="match status" value="1"/>
</dbReference>
<dbReference type="Pfam" id="PF00148">
    <property type="entry name" value="Oxidored_nitro"/>
    <property type="match status" value="1"/>
</dbReference>
<dbReference type="Pfam" id="PF08369">
    <property type="entry name" value="PCP_red"/>
    <property type="match status" value="1"/>
</dbReference>
<dbReference type="PIRSF" id="PIRSF000163">
    <property type="entry name" value="PCP_ChlB"/>
    <property type="match status" value="1"/>
</dbReference>
<dbReference type="SUPFAM" id="SSF53807">
    <property type="entry name" value="Helical backbone' metal receptor"/>
    <property type="match status" value="1"/>
</dbReference>